<accession>Q7NYC7</accession>
<protein>
    <recommendedName>
        <fullName evidence="1">Queuine tRNA-ribosyltransferase</fullName>
        <ecNumber evidence="1">2.4.2.29</ecNumber>
    </recommendedName>
    <alternativeName>
        <fullName evidence="1">Guanine insertion enzyme</fullName>
    </alternativeName>
    <alternativeName>
        <fullName evidence="1">tRNA-guanine transglycosylase</fullName>
    </alternativeName>
</protein>
<organism>
    <name type="scientific">Chromobacterium violaceum (strain ATCC 12472 / DSM 30191 / JCM 1249 / CCUG 213 / NBRC 12614 / NCIMB 9131 / NCTC 9757 / MK)</name>
    <dbReference type="NCBI Taxonomy" id="243365"/>
    <lineage>
        <taxon>Bacteria</taxon>
        <taxon>Pseudomonadati</taxon>
        <taxon>Pseudomonadota</taxon>
        <taxon>Betaproteobacteria</taxon>
        <taxon>Neisseriales</taxon>
        <taxon>Chromobacteriaceae</taxon>
        <taxon>Chromobacterium</taxon>
    </lineage>
</organism>
<sequence length="371" mass="41937">MLKFTVHKTSGGARRGTLELNHGTVETPVFQPVGTYGSVKAMSPVELNDIGAQIILGNTFHLWLRPGLEIVEQFGGLHEFIGWDKPILTDSGGFQVFSLSDMRKLTEEGCTFQSPINGDKLFLSPEISMKIQTVLNSDIVMQLDECTPGQVDHATAQKSLQMSLRWAERSRRAFDDLKNPNALFGIVQGNLYTDLRQESLEGLMQVGFDGIAIGGLSVGEPKPEMYRMLTELKDMLPADKPHYLMGVGTPEDLVHGVANGVDMFDCVMPTRNARNGWIFTQWGDVKIKNARYKDDKKPLDEECACYACRNFSRAYLHHLHRVGEILGARLNTIHNLFYYQELMREMRKAIEEDRFEDFRLEFAAKRARSVN</sequence>
<evidence type="ECO:0000255" key="1">
    <source>
        <dbReference type="HAMAP-Rule" id="MF_00168"/>
    </source>
</evidence>
<name>TGT_CHRVO</name>
<dbReference type="EC" id="2.4.2.29" evidence="1"/>
<dbReference type="EMBL" id="AE016825">
    <property type="protein sequence ID" value="AAQ59022.1"/>
    <property type="molecule type" value="Genomic_DNA"/>
</dbReference>
<dbReference type="RefSeq" id="WP_011134901.1">
    <property type="nucleotide sequence ID" value="NC_005085.1"/>
</dbReference>
<dbReference type="SMR" id="Q7NYC7"/>
<dbReference type="STRING" id="243365.CV_1347"/>
<dbReference type="KEGG" id="cvi:CV_1347"/>
<dbReference type="eggNOG" id="COG0343">
    <property type="taxonomic scope" value="Bacteria"/>
</dbReference>
<dbReference type="HOGENOM" id="CLU_022060_0_1_4"/>
<dbReference type="OrthoDB" id="9805417at2"/>
<dbReference type="UniPathway" id="UPA00392"/>
<dbReference type="Proteomes" id="UP000001424">
    <property type="component" value="Chromosome"/>
</dbReference>
<dbReference type="GO" id="GO:0005829">
    <property type="term" value="C:cytosol"/>
    <property type="evidence" value="ECO:0007669"/>
    <property type="project" value="TreeGrafter"/>
</dbReference>
<dbReference type="GO" id="GO:0046872">
    <property type="term" value="F:metal ion binding"/>
    <property type="evidence" value="ECO:0007669"/>
    <property type="project" value="UniProtKB-KW"/>
</dbReference>
<dbReference type="GO" id="GO:0008479">
    <property type="term" value="F:tRNA-guanosine(34) queuine transglycosylase activity"/>
    <property type="evidence" value="ECO:0007669"/>
    <property type="project" value="UniProtKB-UniRule"/>
</dbReference>
<dbReference type="GO" id="GO:0008616">
    <property type="term" value="P:queuosine biosynthetic process"/>
    <property type="evidence" value="ECO:0007669"/>
    <property type="project" value="UniProtKB-UniRule"/>
</dbReference>
<dbReference type="GO" id="GO:0002099">
    <property type="term" value="P:tRNA wobble guanine modification"/>
    <property type="evidence" value="ECO:0007669"/>
    <property type="project" value="TreeGrafter"/>
</dbReference>
<dbReference type="GO" id="GO:0101030">
    <property type="term" value="P:tRNA-guanine transglycosylation"/>
    <property type="evidence" value="ECO:0007669"/>
    <property type="project" value="InterPro"/>
</dbReference>
<dbReference type="FunFam" id="3.20.20.105:FF:000001">
    <property type="entry name" value="Queuine tRNA-ribosyltransferase"/>
    <property type="match status" value="1"/>
</dbReference>
<dbReference type="Gene3D" id="3.20.20.105">
    <property type="entry name" value="Queuine tRNA-ribosyltransferase-like"/>
    <property type="match status" value="1"/>
</dbReference>
<dbReference type="HAMAP" id="MF_00168">
    <property type="entry name" value="Q_tRNA_Tgt"/>
    <property type="match status" value="1"/>
</dbReference>
<dbReference type="InterPro" id="IPR050076">
    <property type="entry name" value="ArchSynthase1/Queuine_TRR"/>
</dbReference>
<dbReference type="InterPro" id="IPR004803">
    <property type="entry name" value="TGT"/>
</dbReference>
<dbReference type="InterPro" id="IPR036511">
    <property type="entry name" value="TGT-like_sf"/>
</dbReference>
<dbReference type="InterPro" id="IPR002616">
    <property type="entry name" value="tRNA_ribo_trans-like"/>
</dbReference>
<dbReference type="NCBIfam" id="TIGR00430">
    <property type="entry name" value="Q_tRNA_tgt"/>
    <property type="match status" value="1"/>
</dbReference>
<dbReference type="NCBIfam" id="TIGR00449">
    <property type="entry name" value="tgt_general"/>
    <property type="match status" value="1"/>
</dbReference>
<dbReference type="PANTHER" id="PTHR46499">
    <property type="entry name" value="QUEUINE TRNA-RIBOSYLTRANSFERASE"/>
    <property type="match status" value="1"/>
</dbReference>
<dbReference type="PANTHER" id="PTHR46499:SF1">
    <property type="entry name" value="QUEUINE TRNA-RIBOSYLTRANSFERASE"/>
    <property type="match status" value="1"/>
</dbReference>
<dbReference type="Pfam" id="PF01702">
    <property type="entry name" value="TGT"/>
    <property type="match status" value="1"/>
</dbReference>
<dbReference type="SUPFAM" id="SSF51713">
    <property type="entry name" value="tRNA-guanine transglycosylase"/>
    <property type="match status" value="1"/>
</dbReference>
<feature type="chain" id="PRO_1000016777" description="Queuine tRNA-ribosyltransferase">
    <location>
        <begin position="1"/>
        <end position="371"/>
    </location>
</feature>
<feature type="region of interest" description="RNA binding" evidence="1">
    <location>
        <begin position="246"/>
        <end position="252"/>
    </location>
</feature>
<feature type="region of interest" description="RNA binding; important for wobble base 34 recognition" evidence="1">
    <location>
        <begin position="270"/>
        <end position="274"/>
    </location>
</feature>
<feature type="active site" description="Proton acceptor" evidence="1">
    <location>
        <position position="90"/>
    </location>
</feature>
<feature type="active site" description="Nucleophile" evidence="1">
    <location>
        <position position="265"/>
    </location>
</feature>
<feature type="binding site" evidence="1">
    <location>
        <begin position="90"/>
        <end position="94"/>
    </location>
    <ligand>
        <name>substrate</name>
    </ligand>
</feature>
<feature type="binding site" evidence="1">
    <location>
        <position position="144"/>
    </location>
    <ligand>
        <name>substrate</name>
    </ligand>
</feature>
<feature type="binding site" evidence="1">
    <location>
        <position position="188"/>
    </location>
    <ligand>
        <name>substrate</name>
    </ligand>
</feature>
<feature type="binding site" evidence="1">
    <location>
        <position position="215"/>
    </location>
    <ligand>
        <name>substrate</name>
    </ligand>
</feature>
<feature type="binding site" evidence="1">
    <location>
        <position position="303"/>
    </location>
    <ligand>
        <name>Zn(2+)</name>
        <dbReference type="ChEBI" id="CHEBI:29105"/>
    </ligand>
</feature>
<feature type="binding site" evidence="1">
    <location>
        <position position="305"/>
    </location>
    <ligand>
        <name>Zn(2+)</name>
        <dbReference type="ChEBI" id="CHEBI:29105"/>
    </ligand>
</feature>
<feature type="binding site" evidence="1">
    <location>
        <position position="308"/>
    </location>
    <ligand>
        <name>Zn(2+)</name>
        <dbReference type="ChEBI" id="CHEBI:29105"/>
    </ligand>
</feature>
<feature type="binding site" evidence="1">
    <location>
        <position position="334"/>
    </location>
    <ligand>
        <name>Zn(2+)</name>
        <dbReference type="ChEBI" id="CHEBI:29105"/>
    </ligand>
</feature>
<comment type="function">
    <text evidence="1">Catalyzes the base-exchange of a guanine (G) residue with the queuine precursor 7-aminomethyl-7-deazaguanine (PreQ1) at position 34 (anticodon wobble position) in tRNAs with GU(N) anticodons (tRNA-Asp, -Asn, -His and -Tyr). Catalysis occurs through a double-displacement mechanism. The nucleophile active site attacks the C1' of nucleotide 34 to detach the guanine base from the RNA, forming a covalent enzyme-RNA intermediate. The proton acceptor active site deprotonates the incoming PreQ1, allowing a nucleophilic attack on the C1' of the ribose to form the product. After dissociation, two additional enzymatic reactions on the tRNA convert PreQ1 to queuine (Q), resulting in the hypermodified nucleoside queuosine (7-(((4,5-cis-dihydroxy-2-cyclopenten-1-yl)amino)methyl)-7-deazaguanosine).</text>
</comment>
<comment type="catalytic activity">
    <reaction evidence="1">
        <text>7-aminomethyl-7-carbaguanine + guanosine(34) in tRNA = 7-aminomethyl-7-carbaguanosine(34) in tRNA + guanine</text>
        <dbReference type="Rhea" id="RHEA:24104"/>
        <dbReference type="Rhea" id="RHEA-COMP:10341"/>
        <dbReference type="Rhea" id="RHEA-COMP:10342"/>
        <dbReference type="ChEBI" id="CHEBI:16235"/>
        <dbReference type="ChEBI" id="CHEBI:58703"/>
        <dbReference type="ChEBI" id="CHEBI:74269"/>
        <dbReference type="ChEBI" id="CHEBI:82833"/>
        <dbReference type="EC" id="2.4.2.29"/>
    </reaction>
</comment>
<comment type="cofactor">
    <cofactor evidence="1">
        <name>Zn(2+)</name>
        <dbReference type="ChEBI" id="CHEBI:29105"/>
    </cofactor>
    <text evidence="1">Binds 1 zinc ion per subunit.</text>
</comment>
<comment type="pathway">
    <text evidence="1">tRNA modification; tRNA-queuosine biosynthesis.</text>
</comment>
<comment type="subunit">
    <text evidence="1">Homodimer. Within each dimer, one monomer is responsible for RNA recognition and catalysis, while the other monomer binds to the replacement base PreQ1.</text>
</comment>
<comment type="similarity">
    <text evidence="1">Belongs to the queuine tRNA-ribosyltransferase family.</text>
</comment>
<proteinExistence type="inferred from homology"/>
<reference key="1">
    <citation type="journal article" date="2003" name="Proc. Natl. Acad. Sci. U.S.A.">
        <title>The complete genome sequence of Chromobacterium violaceum reveals remarkable and exploitable bacterial adaptability.</title>
        <authorList>
            <person name="Vasconcelos A.T.R."/>
            <person name="de Almeida D.F."/>
            <person name="Hungria M."/>
            <person name="Guimaraes C.T."/>
            <person name="Antonio R.V."/>
            <person name="Almeida F.C."/>
            <person name="de Almeida L.G.P."/>
            <person name="de Almeida R."/>
            <person name="Alves-Gomes J.A."/>
            <person name="Andrade E.M."/>
            <person name="Araripe J."/>
            <person name="de Araujo M.F.F."/>
            <person name="Astolfi-Filho S."/>
            <person name="Azevedo V."/>
            <person name="Baptista A.J."/>
            <person name="Bataus L.A.M."/>
            <person name="Batista J.S."/>
            <person name="Belo A."/>
            <person name="van den Berg C."/>
            <person name="Bogo M."/>
            <person name="Bonatto S."/>
            <person name="Bordignon J."/>
            <person name="Brigido M.M."/>
            <person name="Brito C.A."/>
            <person name="Brocchi M."/>
            <person name="Burity H.A."/>
            <person name="Camargo A.A."/>
            <person name="Cardoso D.D.P."/>
            <person name="Carneiro N.P."/>
            <person name="Carraro D.M."/>
            <person name="Carvalho C.M.B."/>
            <person name="Cascardo J.C.M."/>
            <person name="Cavada B.S."/>
            <person name="Chueire L.M.O."/>
            <person name="Creczynski-Pasa T.B."/>
            <person name="Cunha-Junior N.C."/>
            <person name="Fagundes N."/>
            <person name="Falcao C.L."/>
            <person name="Fantinatti F."/>
            <person name="Farias I.P."/>
            <person name="Felipe M.S.S."/>
            <person name="Ferrari L.P."/>
            <person name="Ferro J.A."/>
            <person name="Ferro M.I.T."/>
            <person name="Franco G.R."/>
            <person name="Freitas N.S.A."/>
            <person name="Furlan L.R."/>
            <person name="Gazzinelli R.T."/>
            <person name="Gomes E.A."/>
            <person name="Goncalves P.R."/>
            <person name="Grangeiro T.B."/>
            <person name="Grattapaglia D."/>
            <person name="Grisard E.C."/>
            <person name="Hanna E.S."/>
            <person name="Jardim S.N."/>
            <person name="Laurino J."/>
            <person name="Leoi L.C.T."/>
            <person name="Lima L.F.A."/>
            <person name="Loureiro M.F."/>
            <person name="Lyra M.C.C.P."/>
            <person name="Madeira H.M.F."/>
            <person name="Manfio G.P."/>
            <person name="Maranhao A.Q."/>
            <person name="Martins W.S."/>
            <person name="di Mauro S.M.Z."/>
            <person name="de Medeiros S.R.B."/>
            <person name="Meissner R.V."/>
            <person name="Moreira M.A.M."/>
            <person name="Nascimento F.F."/>
            <person name="Nicolas M.F."/>
            <person name="Oliveira J.G."/>
            <person name="Oliveira S.C."/>
            <person name="Paixao R.F.C."/>
            <person name="Parente J.A."/>
            <person name="Pedrosa F.O."/>
            <person name="Pena S.D.J."/>
            <person name="Pereira J.O."/>
            <person name="Pereira M."/>
            <person name="Pinto L.S.R.C."/>
            <person name="Pinto L.S."/>
            <person name="Porto J.I.R."/>
            <person name="Potrich D.P."/>
            <person name="Ramalho-Neto C.E."/>
            <person name="Reis A.M.M."/>
            <person name="Rigo L.U."/>
            <person name="Rondinelli E."/>
            <person name="Santos E.B.P."/>
            <person name="Santos F.R."/>
            <person name="Schneider M.P.C."/>
            <person name="Seuanez H.N."/>
            <person name="Silva A.M.R."/>
            <person name="da Silva A.L.C."/>
            <person name="Silva D.W."/>
            <person name="Silva R."/>
            <person name="Simoes I.C."/>
            <person name="Simon D."/>
            <person name="Soares C.M.A."/>
            <person name="Soares R.B.A."/>
            <person name="Souza E.M."/>
            <person name="Souza K.R.L."/>
            <person name="Souza R.C."/>
            <person name="Steffens M.B.R."/>
            <person name="Steindel M."/>
            <person name="Teixeira S.R."/>
            <person name="Urmenyi T."/>
            <person name="Vettore A."/>
            <person name="Wassem R."/>
            <person name="Zaha A."/>
            <person name="Simpson A.J.G."/>
        </authorList>
    </citation>
    <scope>NUCLEOTIDE SEQUENCE [LARGE SCALE GENOMIC DNA]</scope>
    <source>
        <strain>ATCC 12472 / DSM 30191 / JCM 1249 / CCUG 213 / NBRC 12614 / NCIMB 9131 / NCTC 9757 / MK</strain>
    </source>
</reference>
<keyword id="KW-0328">Glycosyltransferase</keyword>
<keyword id="KW-0479">Metal-binding</keyword>
<keyword id="KW-0671">Queuosine biosynthesis</keyword>
<keyword id="KW-1185">Reference proteome</keyword>
<keyword id="KW-0808">Transferase</keyword>
<keyword id="KW-0819">tRNA processing</keyword>
<keyword id="KW-0862">Zinc</keyword>
<gene>
    <name evidence="1" type="primary">tgt</name>
    <name type="ordered locus">CV_1347</name>
</gene>